<proteinExistence type="evidence at protein level"/>
<accession>P86427</accession>
<organism>
    <name type="scientific">Pithecopus nordestinus</name>
    <name type="common">Northeastern Brazilian leaf frog</name>
    <name type="synonym">Phyllomedusa nordestina</name>
    <dbReference type="NCBI Taxonomy" id="2034992"/>
    <lineage>
        <taxon>Eukaryota</taxon>
        <taxon>Metazoa</taxon>
        <taxon>Chordata</taxon>
        <taxon>Craniata</taxon>
        <taxon>Vertebrata</taxon>
        <taxon>Euteleostomi</taxon>
        <taxon>Amphibia</taxon>
        <taxon>Batrachia</taxon>
        <taxon>Anura</taxon>
        <taxon>Neobatrachia</taxon>
        <taxon>Hyloidea</taxon>
        <taxon>Hylidae</taxon>
        <taxon>Phyllomedusinae</taxon>
        <taxon>Pithecopus</taxon>
    </lineage>
</organism>
<protein>
    <recommendedName>
        <fullName evidence="2">Bradykinin-related peptide Pnor-7</fullName>
    </recommendedName>
</protein>
<sequence>VPPKGVSM</sequence>
<reference evidence="3" key="1">
    <citation type="journal article" date="2009" name="J. Venom. Anim. Toxins Incl. Trop. Dis.">
        <title>Identification of bradykinin-related peptides from Phyllomedusa nordestina skin secretion using electrospray ionization tandem mass spectrometry after a single-step liquid chromatography.</title>
        <authorList>
            <person name="Conceicao K."/>
            <person name="Bruni F.M."/>
            <person name="Sciano J.M."/>
            <person name="Konno K."/>
            <person name="Melo R.L."/>
            <person name="Antoniazzi M.M."/>
            <person name="Jared C."/>
            <person name="Lopes-Ferreira M."/>
            <person name="Pimenta D.C."/>
        </authorList>
    </citation>
    <scope>PROTEIN SEQUENCE</scope>
    <scope>FUNCTION</scope>
    <scope>SUBCELLULAR LOCATION</scope>
    <scope>TISSUE SPECIFICITY</scope>
    <scope>MASS SPECTROMETRY</scope>
    <source>
        <tissue evidence="1">Skin secretion</tissue>
    </source>
</reference>
<feature type="peptide" id="PRO_0000391419" description="Bradykinin-related peptide Pnor-7" evidence="1">
    <location>
        <begin position="1"/>
        <end position="8"/>
    </location>
</feature>
<evidence type="ECO:0000269" key="1">
    <source ref="1"/>
</evidence>
<evidence type="ECO:0000303" key="2">
    <source ref="1"/>
</evidence>
<evidence type="ECO:0000305" key="3"/>
<dbReference type="GO" id="GO:0005576">
    <property type="term" value="C:extracellular region"/>
    <property type="evidence" value="ECO:0007669"/>
    <property type="project" value="UniProtKB-SubCell"/>
</dbReference>
<dbReference type="GO" id="GO:0090729">
    <property type="term" value="F:toxin activity"/>
    <property type="evidence" value="ECO:0007669"/>
    <property type="project" value="UniProtKB-KW"/>
</dbReference>
<dbReference type="GO" id="GO:0006952">
    <property type="term" value="P:defense response"/>
    <property type="evidence" value="ECO:0007669"/>
    <property type="project" value="UniProtKB-KW"/>
</dbReference>
<dbReference type="GO" id="GO:0042311">
    <property type="term" value="P:vasodilation"/>
    <property type="evidence" value="ECO:0007669"/>
    <property type="project" value="UniProtKB-KW"/>
</dbReference>
<comment type="function">
    <text evidence="1">Vasodilator. May target bradykinin receptors (BDKRB).</text>
</comment>
<comment type="subcellular location">
    <subcellularLocation>
        <location evidence="1">Secreted</location>
    </subcellularLocation>
</comment>
<comment type="tissue specificity">
    <text evidence="1">Expressed by the skin glands.</text>
</comment>
<comment type="mass spectrometry"/>
<comment type="similarity">
    <text evidence="3">Belongs to the bradykinin-related peptide family.</text>
</comment>
<keyword id="KW-0878">Amphibian defense peptide</keyword>
<keyword id="KW-1222">Bradykinin receptor impairing toxin</keyword>
<keyword id="KW-0903">Direct protein sequencing</keyword>
<keyword id="KW-1213">G-protein coupled receptor impairing toxin</keyword>
<keyword id="KW-0964">Secreted</keyword>
<keyword id="KW-0800">Toxin</keyword>
<keyword id="KW-0838">Vasoactive</keyword>
<keyword id="KW-0840">Vasodilator</keyword>
<name>BRK7_PITNO</name>